<accession>P85790</accession>
<name>PPK5_THEPT</name>
<sequence>SASGSGESSGMWFGPRL</sequence>
<comment type="function">
    <text evidence="1">Myoactive.</text>
</comment>
<comment type="subcellular location">
    <subcellularLocation>
        <location evidence="5">Secreted</location>
    </subcellularLocation>
</comment>
<comment type="similarity">
    <text evidence="2">Belongs to the pyrokinin family.</text>
</comment>
<feature type="peptide" id="PRO_0000378727" description="Pyrokinin-5" evidence="3">
    <location>
        <begin position="1"/>
        <end position="17"/>
    </location>
</feature>
<feature type="modified residue" description="Leucine amide" evidence="3">
    <location>
        <position position="17"/>
    </location>
</feature>
<protein>
    <recommendedName>
        <fullName evidence="1">Pyrokinin-5</fullName>
    </recommendedName>
    <alternativeName>
        <fullName evidence="1">FXPRL-amide</fullName>
    </alternativeName>
    <alternativeName>
        <fullName evidence="4">ThePe-Capa-PK</fullName>
    </alternativeName>
</protein>
<keyword id="KW-0027">Amidation</keyword>
<keyword id="KW-0903">Direct protein sequencing</keyword>
<keyword id="KW-0527">Neuropeptide</keyword>
<keyword id="KW-0964">Secreted</keyword>
<dbReference type="GO" id="GO:0005576">
    <property type="term" value="C:extracellular region"/>
    <property type="evidence" value="ECO:0007669"/>
    <property type="project" value="UniProtKB-SubCell"/>
</dbReference>
<dbReference type="GO" id="GO:0005184">
    <property type="term" value="F:neuropeptide hormone activity"/>
    <property type="evidence" value="ECO:0007669"/>
    <property type="project" value="InterPro"/>
</dbReference>
<dbReference type="GO" id="GO:0007218">
    <property type="term" value="P:neuropeptide signaling pathway"/>
    <property type="evidence" value="ECO:0007669"/>
    <property type="project" value="UniProtKB-KW"/>
</dbReference>
<dbReference type="InterPro" id="IPR001484">
    <property type="entry name" value="Pyrokinin_CS"/>
</dbReference>
<dbReference type="PROSITE" id="PS00539">
    <property type="entry name" value="PYROKININ"/>
    <property type="match status" value="1"/>
</dbReference>
<reference evidence="5" key="1">
    <citation type="journal article" date="2009" name="BMC Evol. Biol.">
        <title>A proteomic approach for studying insect phylogeny: CAPA peptides of ancient insect taxa (Dictyoptera, Blattoptera) as a test case.</title>
        <authorList>
            <person name="Roth S."/>
            <person name="Fromm B."/>
            <person name="Gaede G."/>
            <person name="Predel R."/>
        </authorList>
    </citation>
    <scope>PROTEIN SEQUENCE</scope>
    <scope>AMIDATION AT LEU-17</scope>
    <source>
        <tissue evidence="3">Abdominal perisympathetic organs</tissue>
    </source>
</reference>
<organism>
    <name type="scientific">Therea petiveriana</name>
    <name type="common">Domino cockroach</name>
    <dbReference type="NCBI Taxonomy" id="45965"/>
    <lineage>
        <taxon>Eukaryota</taxon>
        <taxon>Metazoa</taxon>
        <taxon>Ecdysozoa</taxon>
        <taxon>Arthropoda</taxon>
        <taxon>Hexapoda</taxon>
        <taxon>Insecta</taxon>
        <taxon>Pterygota</taxon>
        <taxon>Neoptera</taxon>
        <taxon>Polyneoptera</taxon>
        <taxon>Dictyoptera</taxon>
        <taxon>Blattodea</taxon>
        <taxon>Corydioidea</taxon>
        <taxon>Corydiidae</taxon>
        <taxon>Therea</taxon>
    </lineage>
</organism>
<proteinExistence type="evidence at protein level"/>
<evidence type="ECO:0000250" key="1">
    <source>
        <dbReference type="UniProtKB" id="P82617"/>
    </source>
</evidence>
<evidence type="ECO:0000255" key="2"/>
<evidence type="ECO:0000269" key="3">
    <source>
    </source>
</evidence>
<evidence type="ECO:0000303" key="4">
    <source>
    </source>
</evidence>
<evidence type="ECO:0000305" key="5"/>